<reference key="1">
    <citation type="journal article" date="2007" name="PLoS Genet.">
        <title>The complete genome sequence of Yersinia pseudotuberculosis IP31758, the causative agent of Far East scarlet-like fever.</title>
        <authorList>
            <person name="Eppinger M."/>
            <person name="Rosovitz M.J."/>
            <person name="Fricke W.F."/>
            <person name="Rasko D.A."/>
            <person name="Kokorina G."/>
            <person name="Fayolle C."/>
            <person name="Lindler L.E."/>
            <person name="Carniel E."/>
            <person name="Ravel J."/>
        </authorList>
    </citation>
    <scope>NUCLEOTIDE SEQUENCE [LARGE SCALE GENOMIC DNA]</scope>
    <source>
        <strain>IP 31758</strain>
    </source>
</reference>
<protein>
    <recommendedName>
        <fullName evidence="1">Acetylornithine deacetylase</fullName>
        <shortName evidence="1">AO</shortName>
        <shortName evidence="1">Acetylornithinase</shortName>
        <ecNumber evidence="1">3.5.1.16</ecNumber>
    </recommendedName>
    <alternativeName>
        <fullName evidence="1">N-acetylornithinase</fullName>
        <shortName evidence="1">NAO</shortName>
    </alternativeName>
</protein>
<organism>
    <name type="scientific">Yersinia pseudotuberculosis serotype O:1b (strain IP 31758)</name>
    <dbReference type="NCBI Taxonomy" id="349747"/>
    <lineage>
        <taxon>Bacteria</taxon>
        <taxon>Pseudomonadati</taxon>
        <taxon>Pseudomonadota</taxon>
        <taxon>Gammaproteobacteria</taxon>
        <taxon>Enterobacterales</taxon>
        <taxon>Yersiniaceae</taxon>
        <taxon>Yersinia</taxon>
    </lineage>
</organism>
<sequence>MKMKLPPFIELYRALIATPSISAADSALDQSNEALINLLAGWFADLGFRVEIQPVPDTRHKFNLLASIGENENGEGHGGLLLAGHTDTVPYDEGRWTRDPFTLTEHDHKLYGLGTADMKGFFAFILDAVRDIDASKLTKPLYILATADEETTMAGARYFAANTQLRPDFAIIGEPTSLQPVRAHKGHISNAIRITGQSGHSSDPARGVNAIDLMHESITQLMALRTTLQERYHNPAFTIPYPTMNFGHINGGDAANRICACCELHMDIRPLPGLTLSDLNELMTEALEPVSQRWPGRLSIDELHPPIPGYECPTDHHMVGVIEKLLGERTAVVNYCTEAPFIQQVCPTLVLGPGSINQAHQPDEFIDMAFIEPTRELIGQLVDHFCQQK</sequence>
<gene>
    <name evidence="1" type="primary">argE</name>
    <name type="ordered locus">YpsIP31758_0126</name>
</gene>
<comment type="function">
    <text evidence="1">Catalyzes the hydrolysis of the amide bond of N(2)-acetylated L-amino acids. Cleaves the acetyl group from N-acetyl-L-ornithine to form L-ornithine, an intermediate in L-arginine biosynthesis pathway, and a branchpoint in the synthesis of polyamines.</text>
</comment>
<comment type="catalytic activity">
    <reaction evidence="1">
        <text>N(2)-acetyl-L-ornithine + H2O = L-ornithine + acetate</text>
        <dbReference type="Rhea" id="RHEA:15941"/>
        <dbReference type="ChEBI" id="CHEBI:15377"/>
        <dbReference type="ChEBI" id="CHEBI:30089"/>
        <dbReference type="ChEBI" id="CHEBI:46911"/>
        <dbReference type="ChEBI" id="CHEBI:57805"/>
        <dbReference type="EC" id="3.5.1.16"/>
    </reaction>
</comment>
<comment type="cofactor">
    <cofactor evidence="1">
        <name>Zn(2+)</name>
        <dbReference type="ChEBI" id="CHEBI:29105"/>
    </cofactor>
    <cofactor evidence="1">
        <name>Co(2+)</name>
        <dbReference type="ChEBI" id="CHEBI:48828"/>
    </cofactor>
    <text evidence="1">Binds 2 Zn(2+) or Co(2+) ions per subunit.</text>
</comment>
<comment type="cofactor">
    <cofactor evidence="1">
        <name>glutathione</name>
        <dbReference type="ChEBI" id="CHEBI:57925"/>
    </cofactor>
</comment>
<comment type="pathway">
    <text evidence="1">Amino-acid biosynthesis; L-arginine biosynthesis; L-ornithine from N(2)-acetyl-L-ornithine (linear): step 1/1.</text>
</comment>
<comment type="subunit">
    <text evidence="1">Homodimer.</text>
</comment>
<comment type="subcellular location">
    <subcellularLocation>
        <location evidence="1">Cytoplasm</location>
    </subcellularLocation>
</comment>
<comment type="similarity">
    <text evidence="1">Belongs to the peptidase M20A family. ArgE subfamily.</text>
</comment>
<dbReference type="EC" id="3.5.1.16" evidence="1"/>
<dbReference type="EMBL" id="CP000720">
    <property type="protein sequence ID" value="ABS46874.1"/>
    <property type="molecule type" value="Genomic_DNA"/>
</dbReference>
<dbReference type="SMR" id="A7FCZ8"/>
<dbReference type="MEROPS" id="M20.974"/>
<dbReference type="KEGG" id="ypi:YpsIP31758_0126"/>
<dbReference type="HOGENOM" id="CLU_021802_2_4_6"/>
<dbReference type="UniPathway" id="UPA00068">
    <property type="reaction ID" value="UER00110"/>
</dbReference>
<dbReference type="Proteomes" id="UP000002412">
    <property type="component" value="Chromosome"/>
</dbReference>
<dbReference type="GO" id="GO:0005737">
    <property type="term" value="C:cytoplasm"/>
    <property type="evidence" value="ECO:0007669"/>
    <property type="project" value="UniProtKB-SubCell"/>
</dbReference>
<dbReference type="GO" id="GO:0008777">
    <property type="term" value="F:acetylornithine deacetylase activity"/>
    <property type="evidence" value="ECO:0007669"/>
    <property type="project" value="UniProtKB-UniRule"/>
</dbReference>
<dbReference type="GO" id="GO:0008270">
    <property type="term" value="F:zinc ion binding"/>
    <property type="evidence" value="ECO:0007669"/>
    <property type="project" value="UniProtKB-UniRule"/>
</dbReference>
<dbReference type="GO" id="GO:0006526">
    <property type="term" value="P:L-arginine biosynthetic process"/>
    <property type="evidence" value="ECO:0007669"/>
    <property type="project" value="UniProtKB-UniRule"/>
</dbReference>
<dbReference type="CDD" id="cd03894">
    <property type="entry name" value="M20_ArgE"/>
    <property type="match status" value="1"/>
</dbReference>
<dbReference type="FunFam" id="3.30.70.360:FF:000003">
    <property type="entry name" value="Acetylornithine deacetylase"/>
    <property type="match status" value="1"/>
</dbReference>
<dbReference type="Gene3D" id="3.30.70.360">
    <property type="match status" value="1"/>
</dbReference>
<dbReference type="Gene3D" id="3.40.630.10">
    <property type="entry name" value="Zn peptidases"/>
    <property type="match status" value="1"/>
</dbReference>
<dbReference type="HAMAP" id="MF_01108">
    <property type="entry name" value="ArgE"/>
    <property type="match status" value="1"/>
</dbReference>
<dbReference type="InterPro" id="IPR010169">
    <property type="entry name" value="AcOrn-deacetyl"/>
</dbReference>
<dbReference type="InterPro" id="IPR001261">
    <property type="entry name" value="ArgE/DapE_CS"/>
</dbReference>
<dbReference type="InterPro" id="IPR036264">
    <property type="entry name" value="Bact_exopeptidase_dim_dom"/>
</dbReference>
<dbReference type="InterPro" id="IPR002933">
    <property type="entry name" value="Peptidase_M20"/>
</dbReference>
<dbReference type="InterPro" id="IPR011650">
    <property type="entry name" value="Peptidase_M20_dimer"/>
</dbReference>
<dbReference type="InterPro" id="IPR050072">
    <property type="entry name" value="Peptidase_M20A"/>
</dbReference>
<dbReference type="NCBIfam" id="TIGR01892">
    <property type="entry name" value="AcOrn-deacetyl"/>
    <property type="match status" value="1"/>
</dbReference>
<dbReference type="NCBIfam" id="NF003474">
    <property type="entry name" value="PRK05111.1"/>
    <property type="match status" value="1"/>
</dbReference>
<dbReference type="PANTHER" id="PTHR43808">
    <property type="entry name" value="ACETYLORNITHINE DEACETYLASE"/>
    <property type="match status" value="1"/>
</dbReference>
<dbReference type="PANTHER" id="PTHR43808:SF1">
    <property type="entry name" value="ACETYLORNITHINE DEACETYLASE"/>
    <property type="match status" value="1"/>
</dbReference>
<dbReference type="Pfam" id="PF07687">
    <property type="entry name" value="M20_dimer"/>
    <property type="match status" value="1"/>
</dbReference>
<dbReference type="Pfam" id="PF01546">
    <property type="entry name" value="Peptidase_M20"/>
    <property type="match status" value="1"/>
</dbReference>
<dbReference type="SUPFAM" id="SSF55031">
    <property type="entry name" value="Bacterial exopeptidase dimerisation domain"/>
    <property type="match status" value="1"/>
</dbReference>
<dbReference type="SUPFAM" id="SSF53187">
    <property type="entry name" value="Zn-dependent exopeptidases"/>
    <property type="match status" value="1"/>
</dbReference>
<dbReference type="PROSITE" id="PS00758">
    <property type="entry name" value="ARGE_DAPE_CPG2_1"/>
    <property type="match status" value="1"/>
</dbReference>
<dbReference type="PROSITE" id="PS00759">
    <property type="entry name" value="ARGE_DAPE_CPG2_2"/>
    <property type="match status" value="1"/>
</dbReference>
<evidence type="ECO:0000255" key="1">
    <source>
        <dbReference type="HAMAP-Rule" id="MF_01108"/>
    </source>
</evidence>
<feature type="chain" id="PRO_1000065067" description="Acetylornithine deacetylase">
    <location>
        <begin position="1"/>
        <end position="389"/>
    </location>
</feature>
<feature type="active site" evidence="1">
    <location>
        <position position="87"/>
    </location>
</feature>
<feature type="active site" evidence="1">
    <location>
        <position position="149"/>
    </location>
</feature>
<feature type="binding site" evidence="1">
    <location>
        <position position="85"/>
    </location>
    <ligand>
        <name>Zn(2+)</name>
        <dbReference type="ChEBI" id="CHEBI:29105"/>
        <label>1</label>
    </ligand>
</feature>
<feature type="binding site" evidence="1">
    <location>
        <position position="117"/>
    </location>
    <ligand>
        <name>Zn(2+)</name>
        <dbReference type="ChEBI" id="CHEBI:29105"/>
        <label>1</label>
    </ligand>
</feature>
<feature type="binding site" evidence="1">
    <location>
        <position position="117"/>
    </location>
    <ligand>
        <name>Zn(2+)</name>
        <dbReference type="ChEBI" id="CHEBI:29105"/>
        <label>2</label>
    </ligand>
</feature>
<feature type="binding site" evidence="1">
    <location>
        <position position="150"/>
    </location>
    <ligand>
        <name>Zn(2+)</name>
        <dbReference type="ChEBI" id="CHEBI:29105"/>
        <label>2</label>
    </ligand>
</feature>
<feature type="binding site" evidence="1">
    <location>
        <position position="174"/>
    </location>
    <ligand>
        <name>Zn(2+)</name>
        <dbReference type="ChEBI" id="CHEBI:29105"/>
        <label>1</label>
    </ligand>
</feature>
<feature type="binding site" evidence="1">
    <location>
        <position position="360"/>
    </location>
    <ligand>
        <name>Zn(2+)</name>
        <dbReference type="ChEBI" id="CHEBI:29105"/>
        <label>2</label>
    </ligand>
</feature>
<keyword id="KW-0028">Amino-acid biosynthesis</keyword>
<keyword id="KW-0055">Arginine biosynthesis</keyword>
<keyword id="KW-0170">Cobalt</keyword>
<keyword id="KW-0963">Cytoplasm</keyword>
<keyword id="KW-0378">Hydrolase</keyword>
<keyword id="KW-0479">Metal-binding</keyword>
<keyword id="KW-0862">Zinc</keyword>
<accession>A7FCZ8</accession>
<name>ARGE_YERP3</name>
<proteinExistence type="inferred from homology"/>